<reference key="1">
    <citation type="journal article" date="1997" name="Genes Dev.">
        <title>The an11 locus controlling flower pigmentation in petunia encodes a novel WD-repeat protein conserved in yeast, plants, and animals.</title>
        <authorList>
            <person name="de Vetten N."/>
            <person name="Quattrocchio F."/>
            <person name="Mol J."/>
            <person name="Koes R."/>
        </authorList>
    </citation>
    <scope>NUCLEOTIDE SEQUENCE [MRNA]</scope>
    <source>
        <strain>cv. Columbia</strain>
    </source>
</reference>
<reference key="2">
    <citation type="journal article" date="2000" name="Nature">
        <title>Sequence and analysis of chromosome 1 of the plant Arabidopsis thaliana.</title>
        <authorList>
            <person name="Theologis A."/>
            <person name="Ecker J.R."/>
            <person name="Palm C.J."/>
            <person name="Federspiel N.A."/>
            <person name="Kaul S."/>
            <person name="White O."/>
            <person name="Alonso J."/>
            <person name="Altafi H."/>
            <person name="Araujo R."/>
            <person name="Bowman C.L."/>
            <person name="Brooks S.Y."/>
            <person name="Buehler E."/>
            <person name="Chan A."/>
            <person name="Chao Q."/>
            <person name="Chen H."/>
            <person name="Cheuk R.F."/>
            <person name="Chin C.W."/>
            <person name="Chung M.K."/>
            <person name="Conn L."/>
            <person name="Conway A.B."/>
            <person name="Conway A.R."/>
            <person name="Creasy T.H."/>
            <person name="Dewar K."/>
            <person name="Dunn P."/>
            <person name="Etgu P."/>
            <person name="Feldblyum T.V."/>
            <person name="Feng J.-D."/>
            <person name="Fong B."/>
            <person name="Fujii C.Y."/>
            <person name="Gill J.E."/>
            <person name="Goldsmith A.D."/>
            <person name="Haas B."/>
            <person name="Hansen N.F."/>
            <person name="Hughes B."/>
            <person name="Huizar L."/>
            <person name="Hunter J.L."/>
            <person name="Jenkins J."/>
            <person name="Johnson-Hopson C."/>
            <person name="Khan S."/>
            <person name="Khaykin E."/>
            <person name="Kim C.J."/>
            <person name="Koo H.L."/>
            <person name="Kremenetskaia I."/>
            <person name="Kurtz D.B."/>
            <person name="Kwan A."/>
            <person name="Lam B."/>
            <person name="Langin-Hooper S."/>
            <person name="Lee A."/>
            <person name="Lee J.M."/>
            <person name="Lenz C.A."/>
            <person name="Li J.H."/>
            <person name="Li Y.-P."/>
            <person name="Lin X."/>
            <person name="Liu S.X."/>
            <person name="Liu Z.A."/>
            <person name="Luros J.S."/>
            <person name="Maiti R."/>
            <person name="Marziali A."/>
            <person name="Militscher J."/>
            <person name="Miranda M."/>
            <person name="Nguyen M."/>
            <person name="Nierman W.C."/>
            <person name="Osborne B.I."/>
            <person name="Pai G."/>
            <person name="Peterson J."/>
            <person name="Pham P.K."/>
            <person name="Rizzo M."/>
            <person name="Rooney T."/>
            <person name="Rowley D."/>
            <person name="Sakano H."/>
            <person name="Salzberg S.L."/>
            <person name="Schwartz J.R."/>
            <person name="Shinn P."/>
            <person name="Southwick A.M."/>
            <person name="Sun H."/>
            <person name="Tallon L.J."/>
            <person name="Tambunga G."/>
            <person name="Toriumi M.J."/>
            <person name="Town C.D."/>
            <person name="Utterback T."/>
            <person name="Van Aken S."/>
            <person name="Vaysberg M."/>
            <person name="Vysotskaia V.S."/>
            <person name="Walker M."/>
            <person name="Wu D."/>
            <person name="Yu G."/>
            <person name="Fraser C.M."/>
            <person name="Venter J.C."/>
            <person name="Davis R.W."/>
        </authorList>
    </citation>
    <scope>NUCLEOTIDE SEQUENCE [LARGE SCALE GENOMIC DNA]</scope>
    <source>
        <strain>cv. Columbia</strain>
    </source>
</reference>
<reference key="3">
    <citation type="journal article" date="2017" name="Plant J.">
        <title>Araport11: a complete reannotation of the Arabidopsis thaliana reference genome.</title>
        <authorList>
            <person name="Cheng C.Y."/>
            <person name="Krishnakumar V."/>
            <person name="Chan A.P."/>
            <person name="Thibaud-Nissen F."/>
            <person name="Schobel S."/>
            <person name="Town C.D."/>
        </authorList>
    </citation>
    <scope>GENOME REANNOTATION</scope>
    <source>
        <strain>cv. Columbia</strain>
    </source>
</reference>
<reference key="4">
    <citation type="journal article" date="2003" name="Science">
        <title>Empirical analysis of transcriptional activity in the Arabidopsis genome.</title>
        <authorList>
            <person name="Yamada K."/>
            <person name="Lim J."/>
            <person name="Dale J.M."/>
            <person name="Chen H."/>
            <person name="Shinn P."/>
            <person name="Palm C.J."/>
            <person name="Southwick A.M."/>
            <person name="Wu H.C."/>
            <person name="Kim C.J."/>
            <person name="Nguyen M."/>
            <person name="Pham P.K."/>
            <person name="Cheuk R.F."/>
            <person name="Karlin-Newmann G."/>
            <person name="Liu S.X."/>
            <person name="Lam B."/>
            <person name="Sakano H."/>
            <person name="Wu T."/>
            <person name="Yu G."/>
            <person name="Miranda M."/>
            <person name="Quach H.L."/>
            <person name="Tripp M."/>
            <person name="Chang C.H."/>
            <person name="Lee J.M."/>
            <person name="Toriumi M.J."/>
            <person name="Chan M.M."/>
            <person name="Tang C.C."/>
            <person name="Onodera C.S."/>
            <person name="Deng J.M."/>
            <person name="Akiyama K."/>
            <person name="Ansari Y."/>
            <person name="Arakawa T."/>
            <person name="Banh J."/>
            <person name="Banno F."/>
            <person name="Bowser L."/>
            <person name="Brooks S.Y."/>
            <person name="Carninci P."/>
            <person name="Chao Q."/>
            <person name="Choy N."/>
            <person name="Enju A."/>
            <person name="Goldsmith A.D."/>
            <person name="Gurjal M."/>
            <person name="Hansen N.F."/>
            <person name="Hayashizaki Y."/>
            <person name="Johnson-Hopson C."/>
            <person name="Hsuan V.W."/>
            <person name="Iida K."/>
            <person name="Karnes M."/>
            <person name="Khan S."/>
            <person name="Koesema E."/>
            <person name="Ishida J."/>
            <person name="Jiang P.X."/>
            <person name="Jones T."/>
            <person name="Kawai J."/>
            <person name="Kamiya A."/>
            <person name="Meyers C."/>
            <person name="Nakajima M."/>
            <person name="Narusaka M."/>
            <person name="Seki M."/>
            <person name="Sakurai T."/>
            <person name="Satou M."/>
            <person name="Tamse R."/>
            <person name="Vaysberg M."/>
            <person name="Wallender E.K."/>
            <person name="Wong C."/>
            <person name="Yamamura Y."/>
            <person name="Yuan S."/>
            <person name="Shinozaki K."/>
            <person name="Davis R.W."/>
            <person name="Theologis A."/>
            <person name="Ecker J.R."/>
        </authorList>
    </citation>
    <scope>NUCLEOTIDE SEQUENCE [LARGE SCALE MRNA]</scope>
    <source>
        <strain>cv. Columbia</strain>
    </source>
</reference>
<reference key="5">
    <citation type="submission" date="2002-03" db="EMBL/GenBank/DDBJ databases">
        <title>Full-length cDNA from Arabidopsis thaliana.</title>
        <authorList>
            <person name="Brover V.V."/>
            <person name="Troukhan M.E."/>
            <person name="Alexandrov N.A."/>
            <person name="Lu Y.-P."/>
            <person name="Flavell R.B."/>
            <person name="Feldmann K.A."/>
        </authorList>
    </citation>
    <scope>NUCLEOTIDE SEQUENCE [LARGE SCALE MRNA]</scope>
</reference>
<reference key="6">
    <citation type="journal article" date="2008" name="Plant Physiol.">
        <title>Two new clock proteins, LWD1 and LWD2, regulate Arabidopsis photoperiodic flowering.</title>
        <authorList>
            <person name="Wu J.-F."/>
            <person name="Wang Y."/>
            <person name="Wu S.-H."/>
        </authorList>
    </citation>
    <scope>FUNCTION</scope>
    <scope>DEVELOPMENTAL STAGE</scope>
    <scope>DISRUPTION PHENOTYPE</scope>
</reference>
<reference key="7">
    <citation type="journal article" date="2011" name="Plant Cell">
        <title>LIGHT-REGULATED WD1 and PSEUDO-RESPONSE REGULATOR9 form a positive feedback regulatory loop in the Arabidopsis circadian clock.</title>
        <authorList>
            <person name="Wang Y."/>
            <person name="Wu J.F."/>
            <person name="Nakamichi N."/>
            <person name="Sakakibara H."/>
            <person name="Nam H.G."/>
            <person name="Wu S.H."/>
        </authorList>
    </citation>
    <scope>FUNCTION</scope>
    <scope>INDUCTION</scope>
    <scope>SUBCELLULAR LOCATION</scope>
</reference>
<evidence type="ECO:0000250" key="1">
    <source>
        <dbReference type="UniProtKB" id="Q9XGN1"/>
    </source>
</evidence>
<evidence type="ECO:0000269" key="2">
    <source>
    </source>
</evidence>
<evidence type="ECO:0000269" key="3">
    <source>
    </source>
</evidence>
<evidence type="ECO:0000305" key="4"/>
<organism>
    <name type="scientific">Arabidopsis thaliana</name>
    <name type="common">Mouse-ear cress</name>
    <dbReference type="NCBI Taxonomy" id="3702"/>
    <lineage>
        <taxon>Eukaryota</taxon>
        <taxon>Viridiplantae</taxon>
        <taxon>Streptophyta</taxon>
        <taxon>Embryophyta</taxon>
        <taxon>Tracheophyta</taxon>
        <taxon>Spermatophyta</taxon>
        <taxon>Magnoliopsida</taxon>
        <taxon>eudicotyledons</taxon>
        <taxon>Gunneridae</taxon>
        <taxon>Pentapetalae</taxon>
        <taxon>rosids</taxon>
        <taxon>malvids</taxon>
        <taxon>Brassicales</taxon>
        <taxon>Brassicaceae</taxon>
        <taxon>Camelineae</taxon>
        <taxon>Arabidopsis</taxon>
    </lineage>
</organism>
<keyword id="KW-0007">Acetylation</keyword>
<keyword id="KW-0090">Biological rhythms</keyword>
<keyword id="KW-0539">Nucleus</keyword>
<keyword id="KW-1185">Reference proteome</keyword>
<keyword id="KW-0677">Repeat</keyword>
<keyword id="KW-0716">Sensory transduction</keyword>
<keyword id="KW-0853">WD repeat</keyword>
<accession>Q9LPV9</accession>
<accession>O24513</accession>
<accession>Q8LAQ5</accession>
<feature type="chain" id="PRO_0000363139" description="WD repeat-containing protein LWD1">
    <location>
        <begin position="1"/>
        <end position="346"/>
    </location>
</feature>
<feature type="repeat" description="WD 1">
    <location>
        <begin position="79"/>
        <end position="121"/>
    </location>
</feature>
<feature type="repeat" description="WD 2">
    <location>
        <begin position="133"/>
        <end position="173"/>
    </location>
</feature>
<feature type="repeat" description="WD 3">
    <location>
        <begin position="176"/>
        <end position="214"/>
    </location>
</feature>
<feature type="repeat" description="WD 4">
    <location>
        <begin position="265"/>
        <end position="305"/>
    </location>
</feature>
<feature type="modified residue" description="N-acetylmethionine" evidence="1">
    <location>
        <position position="1"/>
    </location>
</feature>
<feature type="sequence conflict" description="In Ref. 1; AAC18912." evidence="4" ref="1">
    <original>N</original>
    <variation>D</variation>
    <location>
        <position position="231"/>
    </location>
</feature>
<feature type="sequence conflict" description="In Ref. 5; AAM65213." evidence="4" ref="5">
    <original>W</original>
    <variation>L</variation>
    <location>
        <position position="295"/>
    </location>
</feature>
<proteinExistence type="evidence at transcript level"/>
<gene>
    <name type="primary">LWD1</name>
    <name type="synonym">AN11A</name>
    <name type="ordered locus">At1g12910</name>
    <name type="ORF">F13K23.16</name>
</gene>
<name>LWD1_ARATH</name>
<protein>
    <recommendedName>
        <fullName>WD repeat-containing protein LWD1</fullName>
    </recommendedName>
    <alternativeName>
        <fullName>Protein ANTHOCYANIN 11-A</fullName>
        <shortName>AtAN11-A</shortName>
    </alternativeName>
    <alternativeName>
        <fullName>Protein LIGHT-REGULATED WD1</fullName>
    </alternativeName>
    <alternativeName>
        <fullName>WD repeat-containing protein AN11-A</fullName>
    </alternativeName>
</protein>
<comment type="function">
    <text evidence="2 3">Clock protein essential for the proper expression phase and period length of both the oscillator and output genes known to participate in photoperiod sensing. Required for the expression of APRR9, APRR7, and APRR5. Regulated by APRR9 and APRR7 at the transcriptional level, indicating the existence of a positive feedback loop within the circadian clock (PubMed:21357491). May function to delay the expression of the morning genes until dawn approaches.</text>
</comment>
<comment type="subcellular location">
    <subcellularLocation>
        <location evidence="3">Nucleus</location>
    </subcellularLocation>
</comment>
<comment type="developmental stage">
    <text evidence="2">Exhibits circadian rhythm expression.</text>
</comment>
<comment type="induction">
    <text evidence="3">Circadian-regulation.</text>
</comment>
<comment type="disruption phenotype">
    <text evidence="2">Plants lacking LWD1 do not show obvious phenotypic alterations. Plants lacking both LWD1 and LWD2 are early flowering and this phenotype is more prominent under short-day conditions.</text>
</comment>
<dbReference type="EMBL" id="U94746">
    <property type="protein sequence ID" value="AAC18912.1"/>
    <property type="molecule type" value="mRNA"/>
</dbReference>
<dbReference type="EMBL" id="AC012187">
    <property type="protein sequence ID" value="AAF78495.1"/>
    <property type="molecule type" value="Genomic_DNA"/>
</dbReference>
<dbReference type="EMBL" id="CP002684">
    <property type="protein sequence ID" value="AEE28948.1"/>
    <property type="molecule type" value="Genomic_DNA"/>
</dbReference>
<dbReference type="EMBL" id="AY093101">
    <property type="protein sequence ID" value="AAM13100.1"/>
    <property type="molecule type" value="mRNA"/>
</dbReference>
<dbReference type="EMBL" id="AY128776">
    <property type="protein sequence ID" value="AAM91176.1"/>
    <property type="molecule type" value="mRNA"/>
</dbReference>
<dbReference type="EMBL" id="AY087676">
    <property type="protein sequence ID" value="AAM65213.1"/>
    <property type="molecule type" value="mRNA"/>
</dbReference>
<dbReference type="PIR" id="G86262">
    <property type="entry name" value="G86262"/>
</dbReference>
<dbReference type="RefSeq" id="NP_172751.1">
    <property type="nucleotide sequence ID" value="NM_101162.3"/>
</dbReference>
<dbReference type="SMR" id="Q9LPV9"/>
<dbReference type="BioGRID" id="23089">
    <property type="interactions" value="3"/>
</dbReference>
<dbReference type="FunCoup" id="Q9LPV9">
    <property type="interactions" value="4039"/>
</dbReference>
<dbReference type="IntAct" id="Q9LPV9">
    <property type="interactions" value="1"/>
</dbReference>
<dbReference type="STRING" id="3702.Q9LPV9"/>
<dbReference type="iPTMnet" id="Q9LPV9"/>
<dbReference type="PaxDb" id="3702-AT1G12910.1"/>
<dbReference type="ProteomicsDB" id="238743"/>
<dbReference type="EnsemblPlants" id="AT1G12910.1">
    <property type="protein sequence ID" value="AT1G12910.1"/>
    <property type="gene ID" value="AT1G12910"/>
</dbReference>
<dbReference type="GeneID" id="837849"/>
<dbReference type="Gramene" id="AT1G12910.1">
    <property type="protein sequence ID" value="AT1G12910.1"/>
    <property type="gene ID" value="AT1G12910"/>
</dbReference>
<dbReference type="KEGG" id="ath:AT1G12910"/>
<dbReference type="Araport" id="AT1G12910"/>
<dbReference type="TAIR" id="AT1G12910">
    <property type="gene designation" value="ATAN11"/>
</dbReference>
<dbReference type="eggNOG" id="KOG0290">
    <property type="taxonomic scope" value="Eukaryota"/>
</dbReference>
<dbReference type="HOGENOM" id="CLU_013694_0_0_1"/>
<dbReference type="InParanoid" id="Q9LPV9"/>
<dbReference type="OMA" id="TIAMDAC"/>
<dbReference type="OrthoDB" id="24670at2759"/>
<dbReference type="PhylomeDB" id="Q9LPV9"/>
<dbReference type="PRO" id="PR:Q9LPV9"/>
<dbReference type="Proteomes" id="UP000006548">
    <property type="component" value="Chromosome 1"/>
</dbReference>
<dbReference type="ExpressionAtlas" id="Q9LPV9">
    <property type="expression patterns" value="baseline and differential"/>
</dbReference>
<dbReference type="GO" id="GO:0005634">
    <property type="term" value="C:nucleus"/>
    <property type="evidence" value="ECO:0000314"/>
    <property type="project" value="TAIR"/>
</dbReference>
<dbReference type="GO" id="GO:0000976">
    <property type="term" value="F:transcription cis-regulatory region binding"/>
    <property type="evidence" value="ECO:0000314"/>
    <property type="project" value="TAIR"/>
</dbReference>
<dbReference type="GO" id="GO:0009718">
    <property type="term" value="P:anthocyanin-containing compound biosynthetic process"/>
    <property type="evidence" value="ECO:0000303"/>
    <property type="project" value="TAIR"/>
</dbReference>
<dbReference type="GO" id="GO:0043153">
    <property type="term" value="P:entrainment of circadian clock by photoperiod"/>
    <property type="evidence" value="ECO:0000270"/>
    <property type="project" value="TAIR"/>
</dbReference>
<dbReference type="GO" id="GO:0048573">
    <property type="term" value="P:photoperiodism, flowering"/>
    <property type="evidence" value="ECO:0000315"/>
    <property type="project" value="TAIR"/>
</dbReference>
<dbReference type="GO" id="GO:0048511">
    <property type="term" value="P:rhythmic process"/>
    <property type="evidence" value="ECO:0007669"/>
    <property type="project" value="UniProtKB-KW"/>
</dbReference>
<dbReference type="FunFam" id="2.130.10.10:FF:000234">
    <property type="entry name" value="WD repeat-containing protein LWD1"/>
    <property type="match status" value="1"/>
</dbReference>
<dbReference type="Gene3D" id="2.130.10.10">
    <property type="entry name" value="YVTN repeat-like/Quinoprotein amine dehydrogenase"/>
    <property type="match status" value="1"/>
</dbReference>
<dbReference type="InterPro" id="IPR045159">
    <property type="entry name" value="DCAF7-like"/>
</dbReference>
<dbReference type="InterPro" id="IPR015943">
    <property type="entry name" value="WD40/YVTN_repeat-like_dom_sf"/>
</dbReference>
<dbReference type="InterPro" id="IPR019775">
    <property type="entry name" value="WD40_repeat_CS"/>
</dbReference>
<dbReference type="InterPro" id="IPR036322">
    <property type="entry name" value="WD40_repeat_dom_sf"/>
</dbReference>
<dbReference type="InterPro" id="IPR001680">
    <property type="entry name" value="WD40_rpt"/>
</dbReference>
<dbReference type="PANTHER" id="PTHR19919">
    <property type="entry name" value="WD REPEAT CONTAINING PROTEIN"/>
    <property type="match status" value="1"/>
</dbReference>
<dbReference type="Pfam" id="PF00400">
    <property type="entry name" value="WD40"/>
    <property type="match status" value="2"/>
</dbReference>
<dbReference type="SMART" id="SM00320">
    <property type="entry name" value="WD40"/>
    <property type="match status" value="3"/>
</dbReference>
<dbReference type="SUPFAM" id="SSF50978">
    <property type="entry name" value="WD40 repeat-like"/>
    <property type="match status" value="1"/>
</dbReference>
<dbReference type="PROSITE" id="PS00678">
    <property type="entry name" value="WD_REPEATS_1"/>
    <property type="match status" value="2"/>
</dbReference>
<dbReference type="PROSITE" id="PS50082">
    <property type="entry name" value="WD_REPEATS_2"/>
    <property type="match status" value="1"/>
</dbReference>
<dbReference type="PROSITE" id="PS50294">
    <property type="entry name" value="WD_REPEATS_REGION"/>
    <property type="match status" value="1"/>
</dbReference>
<sequence>MGTSSDPIQDGSDEQQKRSEIYTYEAPWHIYAMNWSVRRDKKYRLAITSLLEQYPNRVEIVQLDESNGEIRSDPNLSFEHPYPPTKTIFIPDKECQRPDLLATSSDFLRLWRIADDHSRVELKSCLNSNKNSEFCGPLTSFDWNEAEPRRIGTSSTDTTCTIWDIEREAVDTQLIAHDKEVFDIAWGGVGVFASVSADGSVRVFDLRDKEHSTIIYESSEPDTPLVRLGWNKQDPRYMATIIMDSAKVVVLDIRFPALPVVELQRHQASVNAIAWAPHSSCHICTAGDDSQALIWDISSMGQHVEGGLDPILAYTAGAEIEQLQWSSSQPDWVAIAFSTKLQILRV</sequence>